<comment type="function">
    <text evidence="1">Catalyzes the methylthiolation of an aspartic acid residue of ribosomal protein uS12.</text>
</comment>
<comment type="catalytic activity">
    <reaction evidence="1">
        <text>L-aspartate(89)-[ribosomal protein uS12]-hydrogen + (sulfur carrier)-SH + AH2 + 2 S-adenosyl-L-methionine = 3-methylsulfanyl-L-aspartate(89)-[ribosomal protein uS12]-hydrogen + (sulfur carrier)-H + 5'-deoxyadenosine + L-methionine + A + S-adenosyl-L-homocysteine + 2 H(+)</text>
        <dbReference type="Rhea" id="RHEA:37087"/>
        <dbReference type="Rhea" id="RHEA-COMP:10460"/>
        <dbReference type="Rhea" id="RHEA-COMP:10461"/>
        <dbReference type="Rhea" id="RHEA-COMP:14737"/>
        <dbReference type="Rhea" id="RHEA-COMP:14739"/>
        <dbReference type="ChEBI" id="CHEBI:13193"/>
        <dbReference type="ChEBI" id="CHEBI:15378"/>
        <dbReference type="ChEBI" id="CHEBI:17319"/>
        <dbReference type="ChEBI" id="CHEBI:17499"/>
        <dbReference type="ChEBI" id="CHEBI:29917"/>
        <dbReference type="ChEBI" id="CHEBI:29961"/>
        <dbReference type="ChEBI" id="CHEBI:57844"/>
        <dbReference type="ChEBI" id="CHEBI:57856"/>
        <dbReference type="ChEBI" id="CHEBI:59789"/>
        <dbReference type="ChEBI" id="CHEBI:64428"/>
        <dbReference type="ChEBI" id="CHEBI:73599"/>
        <dbReference type="EC" id="2.8.4.4"/>
    </reaction>
</comment>
<comment type="cofactor">
    <cofactor evidence="1">
        <name>[4Fe-4S] cluster</name>
        <dbReference type="ChEBI" id="CHEBI:49883"/>
    </cofactor>
    <text evidence="1">Binds 2 [4Fe-4S] clusters. One cluster is coordinated with 3 cysteines and an exchangeable S-adenosyl-L-methionine.</text>
</comment>
<comment type="subcellular location">
    <subcellularLocation>
        <location evidence="1">Cytoplasm</location>
    </subcellularLocation>
</comment>
<comment type="similarity">
    <text evidence="1">Belongs to the methylthiotransferase family. RimO subfamily.</text>
</comment>
<gene>
    <name evidence="1" type="primary">rimO</name>
    <name type="ordered locus">PPA1006</name>
</gene>
<accession>Q6A908</accession>
<name>RIMO_CUTAK</name>
<keyword id="KW-0004">4Fe-4S</keyword>
<keyword id="KW-0963">Cytoplasm</keyword>
<keyword id="KW-0408">Iron</keyword>
<keyword id="KW-0411">Iron-sulfur</keyword>
<keyword id="KW-0479">Metal-binding</keyword>
<keyword id="KW-0949">S-adenosyl-L-methionine</keyword>
<keyword id="KW-0808">Transferase</keyword>
<proteinExistence type="inferred from homology"/>
<organism>
    <name type="scientific">Cutibacterium acnes (strain DSM 16379 / KPA171202)</name>
    <name type="common">Propionibacterium acnes</name>
    <dbReference type="NCBI Taxonomy" id="267747"/>
    <lineage>
        <taxon>Bacteria</taxon>
        <taxon>Bacillati</taxon>
        <taxon>Actinomycetota</taxon>
        <taxon>Actinomycetes</taxon>
        <taxon>Propionibacteriales</taxon>
        <taxon>Propionibacteriaceae</taxon>
        <taxon>Cutibacterium</taxon>
    </lineage>
</organism>
<protein>
    <recommendedName>
        <fullName evidence="1">Ribosomal protein uS12 methylthiotransferase RimO</fullName>
        <shortName evidence="1">uS12 MTTase</shortName>
        <shortName evidence="1">uS12 methylthiotransferase</shortName>
        <ecNumber evidence="1">2.8.4.4</ecNumber>
    </recommendedName>
    <alternativeName>
        <fullName evidence="1">Ribosomal protein uS12 (aspartate-C(3))-methylthiotransferase</fullName>
    </alternativeName>
    <alternativeName>
        <fullName evidence="1">Ribosome maturation factor RimO</fullName>
    </alternativeName>
</protein>
<sequence length="481" mass="51716">MSAADHLMTVHLVSMGCARNDVDSEELAARMEAGGFRLVDDPAEAETVVVNTCGFIEQAKKDSVDTLLAAADLKGNGITTSVVAVGCMAERYGRELAESLPEADAVLGFDDYGDIAGRLRTILDGGSLETHVPRDRRTLLPISPVDRPTARAEVSVPGHGTAPDLSASVTPDSGPRATRRRLGTGPSAPLKMASGCDRRCAFCAIPRFRGSYLSRPIAEIVEEARWLVDHGVKEVFLVSENSSSYGKDLGDLRLLEKLLVNLDQVDGLEWIRVSYLQPAELRPGLIDTILATDKVVPYFDLSFQHASGPLLRRMRRFGDAESFLNIIDSIRSRCPEAGLRSNFITGFPGETDADVAVLADFLQRARLDVAGVFAYSDEEGTEAAGLDGHVDEDVVTARREDLADLTDELVSQRAEDRIGTRGRVMVEEIDEAVIGRAEHQGPEVDGCVTLVDAAAVSVGDIVDVEFVGSDGVDLVARPANA</sequence>
<feature type="chain" id="PRO_0000374935" description="Ribosomal protein uS12 methylthiotransferase RimO">
    <location>
        <begin position="1"/>
        <end position="481"/>
    </location>
</feature>
<feature type="domain" description="MTTase N-terminal" evidence="1">
    <location>
        <begin position="8"/>
        <end position="124"/>
    </location>
</feature>
<feature type="domain" description="Radical SAM core" evidence="2">
    <location>
        <begin position="182"/>
        <end position="413"/>
    </location>
</feature>
<feature type="domain" description="TRAM" evidence="1">
    <location>
        <begin position="415"/>
        <end position="480"/>
    </location>
</feature>
<feature type="region of interest" description="Disordered" evidence="3">
    <location>
        <begin position="148"/>
        <end position="188"/>
    </location>
</feature>
<feature type="binding site" evidence="1">
    <location>
        <position position="17"/>
    </location>
    <ligand>
        <name>[4Fe-4S] cluster</name>
        <dbReference type="ChEBI" id="CHEBI:49883"/>
        <label>1</label>
    </ligand>
</feature>
<feature type="binding site" evidence="1">
    <location>
        <position position="53"/>
    </location>
    <ligand>
        <name>[4Fe-4S] cluster</name>
        <dbReference type="ChEBI" id="CHEBI:49883"/>
        <label>1</label>
    </ligand>
</feature>
<feature type="binding site" evidence="1">
    <location>
        <position position="87"/>
    </location>
    <ligand>
        <name>[4Fe-4S] cluster</name>
        <dbReference type="ChEBI" id="CHEBI:49883"/>
        <label>1</label>
    </ligand>
</feature>
<feature type="binding site" evidence="1">
    <location>
        <position position="196"/>
    </location>
    <ligand>
        <name>[4Fe-4S] cluster</name>
        <dbReference type="ChEBI" id="CHEBI:49883"/>
        <label>2</label>
        <note>4Fe-4S-S-AdoMet</note>
    </ligand>
</feature>
<feature type="binding site" evidence="1">
    <location>
        <position position="200"/>
    </location>
    <ligand>
        <name>[4Fe-4S] cluster</name>
        <dbReference type="ChEBI" id="CHEBI:49883"/>
        <label>2</label>
        <note>4Fe-4S-S-AdoMet</note>
    </ligand>
</feature>
<feature type="binding site" evidence="1">
    <location>
        <position position="203"/>
    </location>
    <ligand>
        <name>[4Fe-4S] cluster</name>
        <dbReference type="ChEBI" id="CHEBI:49883"/>
        <label>2</label>
        <note>4Fe-4S-S-AdoMet</note>
    </ligand>
</feature>
<evidence type="ECO:0000255" key="1">
    <source>
        <dbReference type="HAMAP-Rule" id="MF_01865"/>
    </source>
</evidence>
<evidence type="ECO:0000255" key="2">
    <source>
        <dbReference type="PROSITE-ProRule" id="PRU01266"/>
    </source>
</evidence>
<evidence type="ECO:0000256" key="3">
    <source>
        <dbReference type="SAM" id="MobiDB-lite"/>
    </source>
</evidence>
<dbReference type="EC" id="2.8.4.4" evidence="1"/>
<dbReference type="EMBL" id="AE017283">
    <property type="protein sequence ID" value="AAT82758.1"/>
    <property type="molecule type" value="Genomic_DNA"/>
</dbReference>
<dbReference type="SMR" id="Q6A908"/>
<dbReference type="EnsemblBacteria" id="AAT82758">
    <property type="protein sequence ID" value="AAT82758"/>
    <property type="gene ID" value="PPA1006"/>
</dbReference>
<dbReference type="KEGG" id="pac:PPA1006"/>
<dbReference type="eggNOG" id="COG0621">
    <property type="taxonomic scope" value="Bacteria"/>
</dbReference>
<dbReference type="HOGENOM" id="CLU_018697_0_1_11"/>
<dbReference type="Proteomes" id="UP000000603">
    <property type="component" value="Chromosome"/>
</dbReference>
<dbReference type="GO" id="GO:0005829">
    <property type="term" value="C:cytosol"/>
    <property type="evidence" value="ECO:0007669"/>
    <property type="project" value="TreeGrafter"/>
</dbReference>
<dbReference type="GO" id="GO:0051539">
    <property type="term" value="F:4 iron, 4 sulfur cluster binding"/>
    <property type="evidence" value="ECO:0007669"/>
    <property type="project" value="UniProtKB-UniRule"/>
</dbReference>
<dbReference type="GO" id="GO:0035599">
    <property type="term" value="F:aspartic acid methylthiotransferase activity"/>
    <property type="evidence" value="ECO:0007669"/>
    <property type="project" value="TreeGrafter"/>
</dbReference>
<dbReference type="GO" id="GO:0046872">
    <property type="term" value="F:metal ion binding"/>
    <property type="evidence" value="ECO:0007669"/>
    <property type="project" value="UniProtKB-KW"/>
</dbReference>
<dbReference type="GO" id="GO:0103039">
    <property type="term" value="F:protein methylthiotransferase activity"/>
    <property type="evidence" value="ECO:0007669"/>
    <property type="project" value="UniProtKB-EC"/>
</dbReference>
<dbReference type="GO" id="GO:0006400">
    <property type="term" value="P:tRNA modification"/>
    <property type="evidence" value="ECO:0007669"/>
    <property type="project" value="InterPro"/>
</dbReference>
<dbReference type="FunFam" id="3.80.30.20:FF:000001">
    <property type="entry name" value="tRNA-2-methylthio-N(6)-dimethylallyladenosine synthase 2"/>
    <property type="match status" value="1"/>
</dbReference>
<dbReference type="Gene3D" id="3.40.50.12160">
    <property type="entry name" value="Methylthiotransferase, N-terminal domain"/>
    <property type="match status" value="1"/>
</dbReference>
<dbReference type="Gene3D" id="2.40.50.140">
    <property type="entry name" value="Nucleic acid-binding proteins"/>
    <property type="match status" value="1"/>
</dbReference>
<dbReference type="Gene3D" id="3.80.30.20">
    <property type="entry name" value="tm_1862 like domain"/>
    <property type="match status" value="1"/>
</dbReference>
<dbReference type="HAMAP" id="MF_01865">
    <property type="entry name" value="MTTase_RimO"/>
    <property type="match status" value="1"/>
</dbReference>
<dbReference type="InterPro" id="IPR006638">
    <property type="entry name" value="Elp3/MiaA/NifB-like_rSAM"/>
</dbReference>
<dbReference type="InterPro" id="IPR005839">
    <property type="entry name" value="Methylthiotransferase"/>
</dbReference>
<dbReference type="InterPro" id="IPR020612">
    <property type="entry name" value="Methylthiotransferase_CS"/>
</dbReference>
<dbReference type="InterPro" id="IPR013848">
    <property type="entry name" value="Methylthiotransferase_N"/>
</dbReference>
<dbReference type="InterPro" id="IPR038135">
    <property type="entry name" value="Methylthiotransferase_N_sf"/>
</dbReference>
<dbReference type="InterPro" id="IPR012340">
    <property type="entry name" value="NA-bd_OB-fold"/>
</dbReference>
<dbReference type="InterPro" id="IPR005840">
    <property type="entry name" value="Ribosomal_uS12_MeSTrfase_RimO"/>
</dbReference>
<dbReference type="InterPro" id="IPR007197">
    <property type="entry name" value="rSAM"/>
</dbReference>
<dbReference type="InterPro" id="IPR023404">
    <property type="entry name" value="rSAM_horseshoe"/>
</dbReference>
<dbReference type="InterPro" id="IPR002792">
    <property type="entry name" value="TRAM_dom"/>
</dbReference>
<dbReference type="NCBIfam" id="TIGR01125">
    <property type="entry name" value="30S ribosomal protein S12 methylthiotransferase RimO"/>
    <property type="match status" value="1"/>
</dbReference>
<dbReference type="NCBIfam" id="TIGR00089">
    <property type="entry name" value="MiaB/RimO family radical SAM methylthiotransferase"/>
    <property type="match status" value="1"/>
</dbReference>
<dbReference type="PANTHER" id="PTHR43837">
    <property type="entry name" value="RIBOSOMAL PROTEIN S12 METHYLTHIOTRANSFERASE RIMO"/>
    <property type="match status" value="1"/>
</dbReference>
<dbReference type="PANTHER" id="PTHR43837:SF1">
    <property type="entry name" value="RIBOSOMAL PROTEIN US12 METHYLTHIOTRANSFERASE RIMO"/>
    <property type="match status" value="1"/>
</dbReference>
<dbReference type="Pfam" id="PF04055">
    <property type="entry name" value="Radical_SAM"/>
    <property type="match status" value="1"/>
</dbReference>
<dbReference type="Pfam" id="PF18693">
    <property type="entry name" value="TRAM_2"/>
    <property type="match status" value="1"/>
</dbReference>
<dbReference type="Pfam" id="PF00919">
    <property type="entry name" value="UPF0004"/>
    <property type="match status" value="1"/>
</dbReference>
<dbReference type="SFLD" id="SFLDG01082">
    <property type="entry name" value="B12-binding_domain_containing"/>
    <property type="match status" value="1"/>
</dbReference>
<dbReference type="SFLD" id="SFLDS00029">
    <property type="entry name" value="Radical_SAM"/>
    <property type="match status" value="1"/>
</dbReference>
<dbReference type="SFLD" id="SFLDF00274">
    <property type="entry name" value="ribosomal_protein_S12_methylth"/>
    <property type="match status" value="1"/>
</dbReference>
<dbReference type="SMART" id="SM00729">
    <property type="entry name" value="Elp3"/>
    <property type="match status" value="1"/>
</dbReference>
<dbReference type="SUPFAM" id="SSF102114">
    <property type="entry name" value="Radical SAM enzymes"/>
    <property type="match status" value="1"/>
</dbReference>
<dbReference type="PROSITE" id="PS51449">
    <property type="entry name" value="MTTASE_N"/>
    <property type="match status" value="1"/>
</dbReference>
<dbReference type="PROSITE" id="PS01278">
    <property type="entry name" value="MTTASE_RADICAL"/>
    <property type="match status" value="1"/>
</dbReference>
<dbReference type="PROSITE" id="PS51918">
    <property type="entry name" value="RADICAL_SAM"/>
    <property type="match status" value="1"/>
</dbReference>
<reference key="1">
    <citation type="journal article" date="2004" name="Science">
        <title>The complete genome sequence of Propionibacterium acnes, a commensal of human skin.</title>
        <authorList>
            <person name="Brueggemann H."/>
            <person name="Henne A."/>
            <person name="Hoster F."/>
            <person name="Liesegang H."/>
            <person name="Wiezer A."/>
            <person name="Strittmatter A."/>
            <person name="Hujer S."/>
            <person name="Duerre P."/>
            <person name="Gottschalk G."/>
        </authorList>
    </citation>
    <scope>NUCLEOTIDE SEQUENCE [LARGE SCALE GENOMIC DNA]</scope>
    <source>
        <strain>DSM 16379 / KPA171202</strain>
    </source>
</reference>